<feature type="chain" id="PRO_0000186096" description="Chemokine-like factor">
    <location>
        <begin position="1"/>
        <end position="151"/>
    </location>
</feature>
<feature type="transmembrane region" description="Helical" evidence="3">
    <location>
        <begin position="19"/>
        <end position="39"/>
    </location>
</feature>
<feature type="transmembrane region" description="Helical" evidence="3">
    <location>
        <begin position="45"/>
        <end position="65"/>
    </location>
</feature>
<feature type="transmembrane region" description="Helical" evidence="3">
    <location>
        <begin position="74"/>
        <end position="94"/>
    </location>
</feature>
<feature type="transmembrane region" description="Helical" evidence="3">
    <location>
        <begin position="107"/>
        <end position="127"/>
    </location>
</feature>
<feature type="domain" description="MARVEL" evidence="4">
    <location>
        <begin position="13"/>
        <end position="133"/>
    </location>
</feature>
<feature type="glycosylation site" description="N-linked (GlcNAc...) asparagine" evidence="3">
    <location>
        <position position="142"/>
    </location>
</feature>
<feature type="splice variant" id="VSP_050604" description="In isoform CKLF1." evidence="6">
    <location>
        <begin position="26"/>
        <end position="78"/>
    </location>
</feature>
<keyword id="KW-0025">Alternative splicing</keyword>
<keyword id="KW-0145">Chemotaxis</keyword>
<keyword id="KW-0202">Cytokine</keyword>
<keyword id="KW-0325">Glycoprotein</keyword>
<keyword id="KW-0472">Membrane</keyword>
<keyword id="KW-1185">Reference proteome</keyword>
<keyword id="KW-0964">Secreted</keyword>
<keyword id="KW-0812">Transmembrane</keyword>
<keyword id="KW-1133">Transmembrane helix</keyword>
<reference evidence="7" key="1">
    <citation type="journal article" date="2003" name="Gene">
        <title>Molecular cloning and characterization of rat chemokine-like factor 1 and 2.</title>
        <authorList>
            <person name="Lou Y."/>
            <person name="Xia D."/>
            <person name="Han W."/>
            <person name="Wang Y."/>
            <person name="Li X."/>
            <person name="Li Y."/>
            <person name="Rui M."/>
            <person name="Ding P."/>
            <person name="Song Q."/>
            <person name="Zhang Y."/>
            <person name="Ma D."/>
        </authorList>
    </citation>
    <scope>NUCLEOTIDE SEQUENCE [MRNA] (ISOFORMS CKLF1 AND CKLF2)</scope>
    <scope>FUNCTION</scope>
    <scope>TISSUE SPECIFICITY</scope>
    <source>
        <strain evidence="5">Wistar</strain>
        <tissue evidence="5">Liver</tissue>
    </source>
</reference>
<dbReference type="EMBL" id="AF253064">
    <property type="protein sequence ID" value="AAF69502.1"/>
    <property type="molecule type" value="mRNA"/>
</dbReference>
<dbReference type="EMBL" id="AF253065">
    <property type="protein sequence ID" value="AAF69503.1"/>
    <property type="molecule type" value="mRNA"/>
</dbReference>
<dbReference type="RefSeq" id="NP_620811.1">
    <molecule id="Q9JK79-1"/>
    <property type="nucleotide sequence ID" value="NM_139111.2"/>
</dbReference>
<dbReference type="RefSeq" id="XP_038953401.1">
    <molecule id="Q9JK79-2"/>
    <property type="nucleotide sequence ID" value="XM_039097473.2"/>
</dbReference>
<dbReference type="SMR" id="Q9JK79"/>
<dbReference type="FunCoup" id="Q9JK79">
    <property type="interactions" value="83"/>
</dbReference>
<dbReference type="STRING" id="10116.ENSRNOP00000017127"/>
<dbReference type="GlyCosmos" id="Q9JK79">
    <property type="glycosylation" value="1 site, No reported glycans"/>
</dbReference>
<dbReference type="GlyGen" id="Q9JK79">
    <property type="glycosylation" value="1 site"/>
</dbReference>
<dbReference type="PhosphoSitePlus" id="Q9JK79"/>
<dbReference type="PaxDb" id="10116-ENSRNOP00000017127"/>
<dbReference type="Ensembl" id="ENSRNOT00000017127.7">
    <molecule id="Q9JK79-1"/>
    <property type="protein sequence ID" value="ENSRNOP00000017127.3"/>
    <property type="gene ID" value="ENSRNOG00000012752.8"/>
</dbReference>
<dbReference type="Ensembl" id="ENSRNOT00000106021.1">
    <molecule id="Q9JK79-2"/>
    <property type="protein sequence ID" value="ENSRNOP00000085854.1"/>
    <property type="gene ID" value="ENSRNOG00000012752.8"/>
</dbReference>
<dbReference type="GeneID" id="245978"/>
<dbReference type="KEGG" id="rno:245978"/>
<dbReference type="UCSC" id="RGD:620708">
    <molecule id="Q9JK79-1"/>
    <property type="organism name" value="rat"/>
</dbReference>
<dbReference type="AGR" id="RGD:620708"/>
<dbReference type="CTD" id="51192"/>
<dbReference type="RGD" id="620708">
    <property type="gene designation" value="Cklf"/>
</dbReference>
<dbReference type="eggNOG" id="KOG4788">
    <property type="taxonomic scope" value="Eukaryota"/>
</dbReference>
<dbReference type="GeneTree" id="ENSGT00940000162264"/>
<dbReference type="HOGENOM" id="CLU_108546_3_0_1"/>
<dbReference type="InParanoid" id="Q9JK79"/>
<dbReference type="OMA" id="CVLCIID"/>
<dbReference type="OrthoDB" id="5976667at2759"/>
<dbReference type="PhylomeDB" id="Q9JK79"/>
<dbReference type="TreeFam" id="TF317387"/>
<dbReference type="PRO" id="PR:Q9JK79"/>
<dbReference type="Proteomes" id="UP000002494">
    <property type="component" value="Chromosome 19"/>
</dbReference>
<dbReference type="Bgee" id="ENSRNOG00000012752">
    <property type="expression patterns" value="Expressed in testis and 19 other cell types or tissues"/>
</dbReference>
<dbReference type="GO" id="GO:0005576">
    <property type="term" value="C:extracellular region"/>
    <property type="evidence" value="ECO:0000266"/>
    <property type="project" value="RGD"/>
</dbReference>
<dbReference type="GO" id="GO:0005615">
    <property type="term" value="C:extracellular space"/>
    <property type="evidence" value="ECO:0007669"/>
    <property type="project" value="UniProtKB-KW"/>
</dbReference>
<dbReference type="GO" id="GO:0016020">
    <property type="term" value="C:membrane"/>
    <property type="evidence" value="ECO:0000266"/>
    <property type="project" value="RGD"/>
</dbReference>
<dbReference type="GO" id="GO:0008009">
    <property type="term" value="F:chemokine activity"/>
    <property type="evidence" value="ECO:0000266"/>
    <property type="project" value="RGD"/>
</dbReference>
<dbReference type="GO" id="GO:0030595">
    <property type="term" value="P:leukocyte chemotaxis"/>
    <property type="evidence" value="ECO:0000314"/>
    <property type="project" value="RGD"/>
</dbReference>
<dbReference type="GO" id="GO:0048247">
    <property type="term" value="P:lymphocyte chemotaxis"/>
    <property type="evidence" value="ECO:0000266"/>
    <property type="project" value="RGD"/>
</dbReference>
<dbReference type="GO" id="GO:0048246">
    <property type="term" value="P:macrophage chemotaxis"/>
    <property type="evidence" value="ECO:0000266"/>
    <property type="project" value="RGD"/>
</dbReference>
<dbReference type="GO" id="GO:0030593">
    <property type="term" value="P:neutrophil chemotaxis"/>
    <property type="evidence" value="ECO:0000314"/>
    <property type="project" value="RGD"/>
</dbReference>
<dbReference type="GO" id="GO:0032940">
    <property type="term" value="P:secretion by cell"/>
    <property type="evidence" value="ECO:0000266"/>
    <property type="project" value="RGD"/>
</dbReference>
<dbReference type="InterPro" id="IPR008253">
    <property type="entry name" value="Marvel"/>
</dbReference>
<dbReference type="InterPro" id="IPR050578">
    <property type="entry name" value="MARVEL-CKLF_proteins"/>
</dbReference>
<dbReference type="PANTHER" id="PTHR22776:SF45">
    <property type="entry name" value="CHEMOKINE-LIKE FACTOR"/>
    <property type="match status" value="1"/>
</dbReference>
<dbReference type="PANTHER" id="PTHR22776">
    <property type="entry name" value="MARVEL-CONTAINING POTENTIAL LIPID RAFT-ASSOCIATED PROTEIN"/>
    <property type="match status" value="1"/>
</dbReference>
<dbReference type="Pfam" id="PF01284">
    <property type="entry name" value="MARVEL"/>
    <property type="match status" value="1"/>
</dbReference>
<dbReference type="PROSITE" id="PS51225">
    <property type="entry name" value="MARVEL"/>
    <property type="match status" value="1"/>
</dbReference>
<name>CKLF_RAT</name>
<protein>
    <recommendedName>
        <fullName>Chemokine-like factor</fullName>
    </recommendedName>
</protein>
<accession>Q9JK79</accession>
<accession>Q9JK80</accession>
<organism evidence="8">
    <name type="scientific">Rattus norvegicus</name>
    <name type="common">Rat</name>
    <dbReference type="NCBI Taxonomy" id="10116"/>
    <lineage>
        <taxon>Eukaryota</taxon>
        <taxon>Metazoa</taxon>
        <taxon>Chordata</taxon>
        <taxon>Craniata</taxon>
        <taxon>Vertebrata</taxon>
        <taxon>Euteleostomi</taxon>
        <taxon>Mammalia</taxon>
        <taxon>Eutheria</taxon>
        <taxon>Euarchontoglires</taxon>
        <taxon>Glires</taxon>
        <taxon>Rodentia</taxon>
        <taxon>Myomorpha</taxon>
        <taxon>Muroidea</taxon>
        <taxon>Muridae</taxon>
        <taxon>Murinae</taxon>
        <taxon>Rattus</taxon>
    </lineage>
</organism>
<comment type="function">
    <text evidence="1 2">May play an important role in inflammation and regeneration of skeletal muscle (By similarity). Essential for embryonic development (By similarity).</text>
</comment>
<comment type="function">
    <molecule>Isoform CKLF1</molecule>
    <text evidence="2 5">Has chemotactic response in monocytes, neutrophils and lymphocytes (PubMed:12706894). Binds CCR4 (By similarity).</text>
</comment>
<comment type="subcellular location">
    <molecule>Isoform CKLF1</molecule>
    <subcellularLocation>
        <location evidence="2">Secreted</location>
    </subcellularLocation>
</comment>
<comment type="subcellular location">
    <molecule>Isoform CKLF2</molecule>
    <subcellularLocation>
        <location evidence="7">Membrane</location>
        <topology evidence="7">Multi-pass membrane protein</topology>
    </subcellularLocation>
</comment>
<comment type="alternative products">
    <event type="alternative splicing"/>
    <isoform>
        <id>Q9JK79-1</id>
        <name evidence="5">CKLF2</name>
        <sequence type="displayed"/>
    </isoform>
    <isoform>
        <id>Q9JK79-2</id>
        <name evidence="5">CKLF1</name>
        <sequence type="described" ref="VSP_050604"/>
    </isoform>
</comment>
<comment type="tissue specificity">
    <text evidence="5">Both isoforms have highest expression levels in testis with relatively lower expression level in liver, spleen, lung, brain and heart and barely detectable levels in skeletal muscle and kidney were barely detected. In most tissues, isoform CKLF2 has higher expression levels than isoform CKLF1.</text>
</comment>
<comment type="similarity">
    <text evidence="7">Belongs to the chemokine-like factor family.</text>
</comment>
<sequence length="151" mass="16855">MDSPQKVVDHQPFCLSLKCFVKTLRLVVTVASMIFFIVAQAPEPYIVITGFEVTIILFLIALYMCSLDKTMRSFFWPLLDVINSVVTTLFMLIVSVSALIPETSTMIMVGGVFGFLTVICTVADCALMCQKLRFRPHGPYQNRSATDVDDS</sequence>
<gene>
    <name type="primary">Cklf</name>
    <name type="synonym">Cklf1</name>
</gene>
<evidence type="ECO:0000250" key="1">
    <source>
        <dbReference type="UniProtKB" id="Q9DAS1"/>
    </source>
</evidence>
<evidence type="ECO:0000250" key="2">
    <source>
        <dbReference type="UniProtKB" id="Q9UBR5"/>
    </source>
</evidence>
<evidence type="ECO:0000255" key="3"/>
<evidence type="ECO:0000255" key="4">
    <source>
        <dbReference type="PROSITE-ProRule" id="PRU00581"/>
    </source>
</evidence>
<evidence type="ECO:0000269" key="5">
    <source>
    </source>
</evidence>
<evidence type="ECO:0000303" key="6">
    <source>
    </source>
</evidence>
<evidence type="ECO:0000305" key="7"/>
<evidence type="ECO:0000312" key="8">
    <source>
        <dbReference type="EMBL" id="AAF69503.1"/>
    </source>
</evidence>
<proteinExistence type="evidence at transcript level"/>